<dbReference type="EMBL" id="AE009439">
    <property type="protein sequence ID" value="AAM01600.1"/>
    <property type="molecule type" value="Genomic_DNA"/>
</dbReference>
<dbReference type="SMR" id="Q8TYB7"/>
<dbReference type="FunCoup" id="Q8TYB7">
    <property type="interactions" value="111"/>
</dbReference>
<dbReference type="STRING" id="190192.MK0385"/>
<dbReference type="PaxDb" id="190192-MK0385"/>
<dbReference type="EnsemblBacteria" id="AAM01600">
    <property type="protein sequence ID" value="AAM01600"/>
    <property type="gene ID" value="MK0385"/>
</dbReference>
<dbReference type="KEGG" id="mka:MK0385"/>
<dbReference type="PATRIC" id="fig|190192.8.peg.411"/>
<dbReference type="HOGENOM" id="CLU_035750_4_1_2"/>
<dbReference type="InParanoid" id="Q8TYB7"/>
<dbReference type="Proteomes" id="UP000001826">
    <property type="component" value="Chromosome"/>
</dbReference>
<dbReference type="GO" id="GO:0005737">
    <property type="term" value="C:cytoplasm"/>
    <property type="evidence" value="ECO:0007669"/>
    <property type="project" value="UniProtKB-SubCell"/>
</dbReference>
<dbReference type="GO" id="GO:0019773">
    <property type="term" value="C:proteasome core complex, alpha-subunit complex"/>
    <property type="evidence" value="ECO:0000250"/>
    <property type="project" value="UniProtKB"/>
</dbReference>
<dbReference type="GO" id="GO:0004298">
    <property type="term" value="F:threonine-type endopeptidase activity"/>
    <property type="evidence" value="ECO:0007669"/>
    <property type="project" value="InterPro"/>
</dbReference>
<dbReference type="GO" id="GO:0010498">
    <property type="term" value="P:proteasomal protein catabolic process"/>
    <property type="evidence" value="ECO:0007669"/>
    <property type="project" value="UniProtKB-UniRule"/>
</dbReference>
<dbReference type="GO" id="GO:0006511">
    <property type="term" value="P:ubiquitin-dependent protein catabolic process"/>
    <property type="evidence" value="ECO:0007669"/>
    <property type="project" value="InterPro"/>
</dbReference>
<dbReference type="CDD" id="cd03756">
    <property type="entry name" value="proteasome_alpha_archeal"/>
    <property type="match status" value="1"/>
</dbReference>
<dbReference type="FunFam" id="3.60.20.10:FF:000004">
    <property type="entry name" value="Proteasome subunit alpha type-4"/>
    <property type="match status" value="1"/>
</dbReference>
<dbReference type="Gene3D" id="3.60.20.10">
    <property type="entry name" value="Glutamine Phosphoribosylpyrophosphate, subunit 1, domain 1"/>
    <property type="match status" value="1"/>
</dbReference>
<dbReference type="HAMAP" id="MF_00289_A">
    <property type="entry name" value="Proteasome_A_A"/>
    <property type="match status" value="1"/>
</dbReference>
<dbReference type="InterPro" id="IPR029055">
    <property type="entry name" value="Ntn_hydrolases_N"/>
</dbReference>
<dbReference type="InterPro" id="IPR050115">
    <property type="entry name" value="Proteasome_alpha"/>
</dbReference>
<dbReference type="InterPro" id="IPR023332">
    <property type="entry name" value="Proteasome_alpha-type"/>
</dbReference>
<dbReference type="InterPro" id="IPR019982">
    <property type="entry name" value="Proteasome_asu_arc"/>
</dbReference>
<dbReference type="InterPro" id="IPR000426">
    <property type="entry name" value="Proteasome_asu_N"/>
</dbReference>
<dbReference type="InterPro" id="IPR001353">
    <property type="entry name" value="Proteasome_sua/b"/>
</dbReference>
<dbReference type="NCBIfam" id="TIGR03633">
    <property type="entry name" value="arc_protsome_A"/>
    <property type="match status" value="1"/>
</dbReference>
<dbReference type="NCBIfam" id="NF003075">
    <property type="entry name" value="PRK03996.1"/>
    <property type="match status" value="1"/>
</dbReference>
<dbReference type="PANTHER" id="PTHR11599">
    <property type="entry name" value="PROTEASOME SUBUNIT ALPHA/BETA"/>
    <property type="match status" value="1"/>
</dbReference>
<dbReference type="Pfam" id="PF00227">
    <property type="entry name" value="Proteasome"/>
    <property type="match status" value="1"/>
</dbReference>
<dbReference type="Pfam" id="PF10584">
    <property type="entry name" value="Proteasome_A_N"/>
    <property type="match status" value="1"/>
</dbReference>
<dbReference type="SMART" id="SM00948">
    <property type="entry name" value="Proteasome_A_N"/>
    <property type="match status" value="1"/>
</dbReference>
<dbReference type="SUPFAM" id="SSF56235">
    <property type="entry name" value="N-terminal nucleophile aminohydrolases (Ntn hydrolases)"/>
    <property type="match status" value="1"/>
</dbReference>
<dbReference type="PROSITE" id="PS00388">
    <property type="entry name" value="PROTEASOME_ALPHA_1"/>
    <property type="match status" value="1"/>
</dbReference>
<dbReference type="PROSITE" id="PS51475">
    <property type="entry name" value="PROTEASOME_ALPHA_2"/>
    <property type="match status" value="1"/>
</dbReference>
<proteinExistence type="inferred from homology"/>
<name>PSA_METKA</name>
<sequence length="246" mass="27287">MAVQPAQTAYDRAITVFSPDGRLFQVEYAREAVKRGTTALGIKVEEGVVLGVDKRVTSKLIEPESIEKVYQIDTHIGAATAGLVADARVLVERARIEAQTYRYTYGEPIDVDVLVKAICDLKQVYTQHGGVRPFGTALLIAGVDTKGCRLFETDPSGALTEHKATAIGEGRQEALDVFEEEYREDMTLQEAIELAVRALYEASREETTADNLEIAVVDKQGFRKLERKKIEEMFERVVGSEEDEGE</sequence>
<evidence type="ECO:0000255" key="1">
    <source>
        <dbReference type="HAMAP-Rule" id="MF_00289"/>
    </source>
</evidence>
<organism>
    <name type="scientific">Methanopyrus kandleri (strain AV19 / DSM 6324 / JCM 9639 / NBRC 100938)</name>
    <dbReference type="NCBI Taxonomy" id="190192"/>
    <lineage>
        <taxon>Archaea</taxon>
        <taxon>Methanobacteriati</taxon>
        <taxon>Methanobacteriota</taxon>
        <taxon>Methanomada group</taxon>
        <taxon>Methanopyri</taxon>
        <taxon>Methanopyrales</taxon>
        <taxon>Methanopyraceae</taxon>
        <taxon>Methanopyrus</taxon>
    </lineage>
</organism>
<gene>
    <name evidence="1" type="primary">psmA</name>
    <name type="ordered locus">MK0385</name>
</gene>
<comment type="function">
    <text evidence="1">Component of the proteasome core, a large protease complex with broad specificity involved in protein degradation.</text>
</comment>
<comment type="activity regulation">
    <text evidence="1">The formation of the proteasomal ATPase PAN-20S proteasome complex, via the docking of the C-termini of PAN into the intersubunit pockets in the alpha-rings, triggers opening of the gate for substrate entry. Interconversion between the open-gate and close-gate conformations leads to a dynamic regulation of the 20S proteasome proteolysis activity.</text>
</comment>
<comment type="subunit">
    <text evidence="1">The 20S proteasome core is composed of 14 alpha and 14 beta subunits that assemble into four stacked heptameric rings, resulting in a barrel-shaped structure. The two inner rings, each composed of seven catalytic beta subunits, are sandwiched by two outer rings, each composed of seven alpha subunits. The catalytic chamber with the active sites is on the inside of the barrel. Has a gated structure, the ends of the cylinder being occluded by the N-termini of the alpha-subunits. Is capped at one or both ends by the proteasome regulatory ATPase, PAN.</text>
</comment>
<comment type="subcellular location">
    <subcellularLocation>
        <location evidence="1">Cytoplasm</location>
    </subcellularLocation>
</comment>
<comment type="similarity">
    <text evidence="1">Belongs to the peptidase T1A family.</text>
</comment>
<protein>
    <recommendedName>
        <fullName evidence="1">Proteasome subunit alpha</fullName>
    </recommendedName>
    <alternativeName>
        <fullName evidence="1">20S proteasome alpha subunit</fullName>
    </alternativeName>
    <alternativeName>
        <fullName evidence="1">Proteasome core protein PsmA</fullName>
    </alternativeName>
</protein>
<feature type="chain" id="PRO_0000124175" description="Proteasome subunit alpha">
    <location>
        <begin position="1"/>
        <end position="246"/>
    </location>
</feature>
<accession>Q8TYB7</accession>
<reference key="1">
    <citation type="journal article" date="2002" name="Proc. Natl. Acad. Sci. U.S.A.">
        <title>The complete genome of hyperthermophile Methanopyrus kandleri AV19 and monophyly of archaeal methanogens.</title>
        <authorList>
            <person name="Slesarev A.I."/>
            <person name="Mezhevaya K.V."/>
            <person name="Makarova K.S."/>
            <person name="Polushin N.N."/>
            <person name="Shcherbinina O.V."/>
            <person name="Shakhova V.V."/>
            <person name="Belova G.I."/>
            <person name="Aravind L."/>
            <person name="Natale D.A."/>
            <person name="Rogozin I.B."/>
            <person name="Tatusov R.L."/>
            <person name="Wolf Y.I."/>
            <person name="Stetter K.O."/>
            <person name="Malykh A.G."/>
            <person name="Koonin E.V."/>
            <person name="Kozyavkin S.A."/>
        </authorList>
    </citation>
    <scope>NUCLEOTIDE SEQUENCE [LARGE SCALE GENOMIC DNA]</scope>
    <source>
        <strain>AV19 / DSM 6324 / JCM 9639 / NBRC 100938</strain>
    </source>
</reference>
<keyword id="KW-0963">Cytoplasm</keyword>
<keyword id="KW-0647">Proteasome</keyword>
<keyword id="KW-1185">Reference proteome</keyword>